<gene>
    <name evidence="5" type="primary">UGT88F2</name>
</gene>
<proteinExistence type="evidence at protein level"/>
<evidence type="ECO:0000250" key="1">
    <source>
        <dbReference type="UniProtKB" id="A0A0A1HA03"/>
    </source>
</evidence>
<evidence type="ECO:0000250" key="2">
    <source>
        <dbReference type="UniProtKB" id="B3TKC8"/>
    </source>
</evidence>
<evidence type="ECO:0000250" key="3">
    <source>
        <dbReference type="UniProtKB" id="P51094"/>
    </source>
</evidence>
<evidence type="ECO:0000269" key="4">
    <source ref="1"/>
</evidence>
<evidence type="ECO:0000303" key="5">
    <source ref="1"/>
</evidence>
<evidence type="ECO:0000305" key="6"/>
<accession>D3UAG3</accession>
<comment type="function">
    <text evidence="2 4">Glycosyltransferase that possesses phloretin 2'-O-glycosyltransferase activity. Converts phloretin to phlorizin (phloretin 2'-O-glucoside), a potent antioxidant. Is specific for phloretin and does not possess glycosyltransferase activity toward naringenin, naringenin chalcone, eriodictyol, eriodictyol chalcone, apigenin, luteolin, kaempferol, quercetin, isoliquiritigenin, butein, caffeic acid, 2-coumaric acid, 3-coumaric acid, 3-hydroxybenzoic acid, 3,4-dihydroxybenzoic acid and 3,4-dihydroxyhydrocinnamic acid (Ref.1). Can glycosylate phloretin in the presence of UDP-glucose, UDP-xylose and UDP-galactose (By similarity).</text>
</comment>
<comment type="catalytic activity">
    <reaction evidence="4">
        <text>phloretin + UDP-alpha-D-glucose = phlorizin + UDP + H(+)</text>
        <dbReference type="Rhea" id="RHEA:51576"/>
        <dbReference type="ChEBI" id="CHEBI:8113"/>
        <dbReference type="ChEBI" id="CHEBI:15378"/>
        <dbReference type="ChEBI" id="CHEBI:17276"/>
        <dbReference type="ChEBI" id="CHEBI:58223"/>
        <dbReference type="ChEBI" id="CHEBI:58885"/>
    </reaction>
</comment>
<comment type="biophysicochemical properties">
    <phDependence>
        <text evidence="4">Optimum pH is 8.0.</text>
    </phDependence>
    <temperatureDependence>
        <text evidence="4">Optimum temperature is 45 degrees Celsius.</text>
    </temperatureDependence>
</comment>
<comment type="similarity">
    <text evidence="6">Belongs to the UDP-glycosyltransferase family.</text>
</comment>
<protein>
    <recommendedName>
        <fullName evidence="6">Phloretin 2'-O-glucosyltransferase</fullName>
        <ecNumber evidence="4">2.4.1.-</ecNumber>
    </recommendedName>
    <alternativeName>
        <fullName evidence="6">UDP-glucose:phloretin 2'-O-glucosyltransferase</fullName>
    </alternativeName>
    <alternativeName>
        <fullName evidence="5">UDP-glycosyltransferase 88F2</fullName>
    </alternativeName>
</protein>
<name>U88F2_PYRCO</name>
<feature type="chain" id="PRO_0000434453" description="Phloretin 2'-O-glucosyltransferase">
    <location>
        <begin position="1"/>
        <end position="483"/>
    </location>
</feature>
<feature type="active site" description="Proton acceptor" evidence="1">
    <location>
        <position position="15"/>
    </location>
</feature>
<feature type="active site" description="Charge relay" evidence="1">
    <location>
        <position position="118"/>
    </location>
</feature>
<feature type="binding site" evidence="3">
    <location>
        <position position="15"/>
    </location>
    <ligand>
        <name>an anthocyanidin</name>
        <dbReference type="ChEBI" id="CHEBI:143576"/>
    </ligand>
</feature>
<feature type="binding site" evidence="1">
    <location>
        <position position="140"/>
    </location>
    <ligand>
        <name>UDP-alpha-D-glucose</name>
        <dbReference type="ChEBI" id="CHEBI:58885"/>
    </ligand>
</feature>
<feature type="binding site" evidence="1">
    <location>
        <position position="360"/>
    </location>
    <ligand>
        <name>UDP-alpha-D-glucose</name>
        <dbReference type="ChEBI" id="CHEBI:58885"/>
    </ligand>
</feature>
<feature type="binding site" evidence="1">
    <location>
        <position position="362"/>
    </location>
    <ligand>
        <name>UDP-alpha-D-glucose</name>
        <dbReference type="ChEBI" id="CHEBI:58885"/>
    </ligand>
</feature>
<feature type="binding site" evidence="1">
    <location>
        <position position="377"/>
    </location>
    <ligand>
        <name>UDP-alpha-D-glucose</name>
        <dbReference type="ChEBI" id="CHEBI:58885"/>
    </ligand>
</feature>
<feature type="binding site" evidence="1">
    <location>
        <position position="380"/>
    </location>
    <ligand>
        <name>UDP-alpha-D-glucose</name>
        <dbReference type="ChEBI" id="CHEBI:58885"/>
    </ligand>
</feature>
<feature type="binding site" evidence="1">
    <location>
        <position position="381"/>
    </location>
    <ligand>
        <name>UDP-alpha-D-glucose</name>
        <dbReference type="ChEBI" id="CHEBI:58885"/>
    </ligand>
</feature>
<feature type="binding site" evidence="1">
    <location>
        <position position="382"/>
    </location>
    <ligand>
        <name>UDP-alpha-D-glucose</name>
        <dbReference type="ChEBI" id="CHEBI:58885"/>
    </ligand>
</feature>
<feature type="binding site" evidence="1">
    <location>
        <position position="385"/>
    </location>
    <ligand>
        <name>UDP-alpha-D-glucose</name>
        <dbReference type="ChEBI" id="CHEBI:58885"/>
    </ligand>
</feature>
<feature type="binding site" evidence="3">
    <location>
        <position position="400"/>
    </location>
    <ligand>
        <name>an anthocyanidin</name>
        <dbReference type="ChEBI" id="CHEBI:143576"/>
    </ligand>
</feature>
<feature type="binding site" evidence="1">
    <location>
        <position position="401"/>
    </location>
    <ligand>
        <name>UDP-alpha-D-glucose</name>
        <dbReference type="ChEBI" id="CHEBI:58885"/>
    </ligand>
</feature>
<feature type="binding site" evidence="1">
    <location>
        <position position="402"/>
    </location>
    <ligand>
        <name>UDP-alpha-D-glucose</name>
        <dbReference type="ChEBI" id="CHEBI:58885"/>
    </ligand>
</feature>
<sequence>MGDVIVLYASPGMGHIVAMVELGKFIVHRYGPHKFSITILYTCGSIVDTASIPVYIRRISHSHPFISFRQFPRVTNNITRNISVPAITFDFIRQNDPHVRSALQEISKSATVRAFIIDLFCTSALPIGKEFNIPTYYFHTSGAAVLAAFLYLPKIDEQTKTTESFKDLRDTVFEFPGWKSPLKATHMVQLVLDRNDPAYSDMIYFCSHLPKSNGIIVNTFEELEPPSVLQAIAGGLCVPDGPTPPVYYVGPLIEEEKELSKDADAAEKEDCLSWLDKQPSRSVLFLCFGSMGSFPAAQLKEIANGLEASGQRFLWVVKKPPVEEKSKQVHGVDDFDLKGVLPEGFLERTADRGMVVKSWAPQVVVLKKESVGGFVTHCGWNSVLEAVVAGVPMIAWPLYAEQHMNRNVLVTDMEIAIGVEQRDEEGGFVSGEEVERRVRELMESEGGRALRERCKKLGEMASAALGETGSSTRNLVNFVSSIT</sequence>
<organism>
    <name type="scientific">Pyrus communis</name>
    <name type="common">Pear</name>
    <name type="synonym">Pyrus domestica</name>
    <dbReference type="NCBI Taxonomy" id="23211"/>
    <lineage>
        <taxon>Eukaryota</taxon>
        <taxon>Viridiplantae</taxon>
        <taxon>Streptophyta</taxon>
        <taxon>Embryophyta</taxon>
        <taxon>Tracheophyta</taxon>
        <taxon>Spermatophyta</taxon>
        <taxon>Magnoliopsida</taxon>
        <taxon>eudicotyledons</taxon>
        <taxon>Gunneridae</taxon>
        <taxon>Pentapetalae</taxon>
        <taxon>rosids</taxon>
        <taxon>fabids</taxon>
        <taxon>Rosales</taxon>
        <taxon>Rosaceae</taxon>
        <taxon>Amygdaloideae</taxon>
        <taxon>Maleae</taxon>
        <taxon>Pyrus</taxon>
    </lineage>
</organism>
<keyword id="KW-0328">Glycosyltransferase</keyword>
<keyword id="KW-0808">Transferase</keyword>
<reference key="1">
    <citation type="journal article" date="2010" name="Plant Sci.">
        <title>Cloning and heterologous expression of glycosyltransferases from Malus x domestica and Pyrus communis, which convert phloretin to phloretin 2'-O-glucoside (phloridzin).</title>
        <authorList>
            <person name="Gosch C."/>
            <person name="Halbwirth H."/>
            <person name="Schneider B."/>
            <person name="Holscher D."/>
            <person name="Stich K."/>
        </authorList>
    </citation>
    <scope>NUCLEOTIDE SEQUENCE [MRNA]</scope>
    <scope>FUNCTION</scope>
    <scope>CATALYTIC ACTIVITY</scope>
    <scope>BIOPHYSICOCHEMICAL PROPERTIES</scope>
    <source>
        <strain>cv. Abbe Fetel</strain>
    </source>
</reference>
<dbReference type="EC" id="2.4.1.-" evidence="4"/>
<dbReference type="EMBL" id="FJ854496">
    <property type="protein sequence ID" value="ACZ44838.1"/>
    <property type="molecule type" value="mRNA"/>
</dbReference>
<dbReference type="SMR" id="D3UAG3"/>
<dbReference type="CAZy" id="GT1">
    <property type="family name" value="Glycosyltransferase Family 1"/>
</dbReference>
<dbReference type="GO" id="GO:0035251">
    <property type="term" value="F:UDP-glucosyltransferase activity"/>
    <property type="evidence" value="ECO:0000314"/>
    <property type="project" value="UniProtKB"/>
</dbReference>
<dbReference type="CDD" id="cd03784">
    <property type="entry name" value="GT1_Gtf-like"/>
    <property type="match status" value="1"/>
</dbReference>
<dbReference type="FunFam" id="3.40.50.2000:FF:000020">
    <property type="entry name" value="Glycosyltransferase"/>
    <property type="match status" value="1"/>
</dbReference>
<dbReference type="FunFam" id="3.40.50.2000:FF:000095">
    <property type="entry name" value="Glycosyltransferase"/>
    <property type="match status" value="1"/>
</dbReference>
<dbReference type="Gene3D" id="3.40.50.2000">
    <property type="entry name" value="Glycogen Phosphorylase B"/>
    <property type="match status" value="2"/>
</dbReference>
<dbReference type="InterPro" id="IPR050481">
    <property type="entry name" value="UDP-glycosyltransf_plant"/>
</dbReference>
<dbReference type="InterPro" id="IPR002213">
    <property type="entry name" value="UDP_glucos_trans"/>
</dbReference>
<dbReference type="InterPro" id="IPR035595">
    <property type="entry name" value="UDP_glycos_trans_CS"/>
</dbReference>
<dbReference type="PANTHER" id="PTHR48048">
    <property type="entry name" value="GLYCOSYLTRANSFERASE"/>
    <property type="match status" value="1"/>
</dbReference>
<dbReference type="PANTHER" id="PTHR48048:SF20">
    <property type="entry name" value="GLYCOSYLTRANSFERASE"/>
    <property type="match status" value="1"/>
</dbReference>
<dbReference type="Pfam" id="PF00201">
    <property type="entry name" value="UDPGT"/>
    <property type="match status" value="1"/>
</dbReference>
<dbReference type="SUPFAM" id="SSF53756">
    <property type="entry name" value="UDP-Glycosyltransferase/glycogen phosphorylase"/>
    <property type="match status" value="1"/>
</dbReference>
<dbReference type="PROSITE" id="PS00375">
    <property type="entry name" value="UDPGT"/>
    <property type="match status" value="1"/>
</dbReference>